<evidence type="ECO:0000255" key="1">
    <source>
        <dbReference type="HAMAP-Rule" id="MF_00152"/>
    </source>
</evidence>
<protein>
    <recommendedName>
        <fullName evidence="1">Probable endonuclease 4</fullName>
        <ecNumber evidence="1">3.1.21.2</ecNumber>
    </recommendedName>
    <alternativeName>
        <fullName evidence="1">Endodeoxyribonuclease IV</fullName>
    </alternativeName>
    <alternativeName>
        <fullName evidence="1">Endonuclease IV</fullName>
    </alternativeName>
</protein>
<keyword id="KW-0227">DNA damage</keyword>
<keyword id="KW-0234">DNA repair</keyword>
<keyword id="KW-0255">Endonuclease</keyword>
<keyword id="KW-0378">Hydrolase</keyword>
<keyword id="KW-0479">Metal-binding</keyword>
<keyword id="KW-0540">Nuclease</keyword>
<keyword id="KW-0862">Zinc</keyword>
<organism>
    <name type="scientific">Bacillus thuringiensis (strain Al Hakam)</name>
    <dbReference type="NCBI Taxonomy" id="412694"/>
    <lineage>
        <taxon>Bacteria</taxon>
        <taxon>Bacillati</taxon>
        <taxon>Bacillota</taxon>
        <taxon>Bacilli</taxon>
        <taxon>Bacillales</taxon>
        <taxon>Bacillaceae</taxon>
        <taxon>Bacillus</taxon>
        <taxon>Bacillus cereus group</taxon>
    </lineage>
</organism>
<comment type="function">
    <text evidence="1">Endonuclease IV plays a role in DNA repair. It cleaves phosphodiester bonds at apurinic or apyrimidinic (AP) sites, generating a 3'-hydroxyl group and a 5'-terminal sugar phosphate.</text>
</comment>
<comment type="catalytic activity">
    <reaction evidence="1">
        <text>Endonucleolytic cleavage to 5'-phosphooligonucleotide end-products.</text>
        <dbReference type="EC" id="3.1.21.2"/>
    </reaction>
</comment>
<comment type="cofactor">
    <cofactor evidence="1">
        <name>Zn(2+)</name>
        <dbReference type="ChEBI" id="CHEBI:29105"/>
    </cofactor>
    <text evidence="1">Binds 3 Zn(2+) ions.</text>
</comment>
<comment type="similarity">
    <text evidence="1">Belongs to the AP endonuclease 2 family.</text>
</comment>
<sequence length="298" mass="32910">MLKIGSHVSMSGKKMLLAASEEAVSYGATTFMIYTGAPQNTRRKPIEELNIEAGRKHMEQNGIEEIIVHAPYIINVGNTTKPETFQLGVDFLRMEIERTSALGVAKQIVLHPGAHVGAGADAGIQQIIKGLNEVLTPDQTVNIALETMAGKGTECGRSFEEIAKIIDGVKYNEKLSVCFDTCHTHDAGYDIVNDFDGVLNEFDKIVGIDRLQVLHINDSKNVRGAGKDRHENIGFGHIGYKALHHIVHHPQLTHVPKILETPYVGEDKKDKKPPYKLEIEMLKNGTFDEGLLEKIKAQ</sequence>
<gene>
    <name evidence="1" type="primary">nfo</name>
    <name type="ordered locus">BALH_3877</name>
</gene>
<dbReference type="EC" id="3.1.21.2" evidence="1"/>
<dbReference type="EMBL" id="CP000485">
    <property type="protein sequence ID" value="ABK87101.1"/>
    <property type="molecule type" value="Genomic_DNA"/>
</dbReference>
<dbReference type="RefSeq" id="WP_000912466.1">
    <property type="nucleotide sequence ID" value="NC_008600.1"/>
</dbReference>
<dbReference type="SMR" id="A0RIQ8"/>
<dbReference type="KEGG" id="btl:BALH_3877"/>
<dbReference type="HOGENOM" id="CLU_025885_4_1_9"/>
<dbReference type="GO" id="GO:0008833">
    <property type="term" value="F:deoxyribonuclease IV (phage-T4-induced) activity"/>
    <property type="evidence" value="ECO:0007669"/>
    <property type="project" value="UniProtKB-UniRule"/>
</dbReference>
<dbReference type="GO" id="GO:0003677">
    <property type="term" value="F:DNA binding"/>
    <property type="evidence" value="ECO:0007669"/>
    <property type="project" value="InterPro"/>
</dbReference>
<dbReference type="GO" id="GO:0003906">
    <property type="term" value="F:DNA-(apurinic or apyrimidinic site) endonuclease activity"/>
    <property type="evidence" value="ECO:0007669"/>
    <property type="project" value="TreeGrafter"/>
</dbReference>
<dbReference type="GO" id="GO:0008081">
    <property type="term" value="F:phosphoric diester hydrolase activity"/>
    <property type="evidence" value="ECO:0007669"/>
    <property type="project" value="TreeGrafter"/>
</dbReference>
<dbReference type="GO" id="GO:0008270">
    <property type="term" value="F:zinc ion binding"/>
    <property type="evidence" value="ECO:0007669"/>
    <property type="project" value="UniProtKB-UniRule"/>
</dbReference>
<dbReference type="GO" id="GO:0006284">
    <property type="term" value="P:base-excision repair"/>
    <property type="evidence" value="ECO:0007669"/>
    <property type="project" value="TreeGrafter"/>
</dbReference>
<dbReference type="CDD" id="cd00019">
    <property type="entry name" value="AP2Ec"/>
    <property type="match status" value="1"/>
</dbReference>
<dbReference type="FunFam" id="3.20.20.150:FF:000001">
    <property type="entry name" value="Probable endonuclease 4"/>
    <property type="match status" value="1"/>
</dbReference>
<dbReference type="Gene3D" id="3.20.20.150">
    <property type="entry name" value="Divalent-metal-dependent TIM barrel enzymes"/>
    <property type="match status" value="1"/>
</dbReference>
<dbReference type="HAMAP" id="MF_00152">
    <property type="entry name" value="Nfo"/>
    <property type="match status" value="1"/>
</dbReference>
<dbReference type="InterPro" id="IPR001719">
    <property type="entry name" value="AP_endonuc_2"/>
</dbReference>
<dbReference type="InterPro" id="IPR018246">
    <property type="entry name" value="AP_endonuc_F2_Zn_BS"/>
</dbReference>
<dbReference type="InterPro" id="IPR036237">
    <property type="entry name" value="Xyl_isomerase-like_sf"/>
</dbReference>
<dbReference type="InterPro" id="IPR013022">
    <property type="entry name" value="Xyl_isomerase-like_TIM-brl"/>
</dbReference>
<dbReference type="NCBIfam" id="TIGR00587">
    <property type="entry name" value="nfo"/>
    <property type="match status" value="1"/>
</dbReference>
<dbReference type="NCBIfam" id="NF002196">
    <property type="entry name" value="PRK01060.1-1"/>
    <property type="match status" value="1"/>
</dbReference>
<dbReference type="PANTHER" id="PTHR21445:SF0">
    <property type="entry name" value="APURINIC-APYRIMIDINIC ENDONUCLEASE"/>
    <property type="match status" value="1"/>
</dbReference>
<dbReference type="PANTHER" id="PTHR21445">
    <property type="entry name" value="ENDONUCLEASE IV ENDODEOXYRIBONUCLEASE IV"/>
    <property type="match status" value="1"/>
</dbReference>
<dbReference type="Pfam" id="PF01261">
    <property type="entry name" value="AP_endonuc_2"/>
    <property type="match status" value="1"/>
</dbReference>
<dbReference type="SMART" id="SM00518">
    <property type="entry name" value="AP2Ec"/>
    <property type="match status" value="1"/>
</dbReference>
<dbReference type="SUPFAM" id="SSF51658">
    <property type="entry name" value="Xylose isomerase-like"/>
    <property type="match status" value="1"/>
</dbReference>
<dbReference type="PROSITE" id="PS00729">
    <property type="entry name" value="AP_NUCLEASE_F2_1"/>
    <property type="match status" value="1"/>
</dbReference>
<dbReference type="PROSITE" id="PS00730">
    <property type="entry name" value="AP_NUCLEASE_F2_2"/>
    <property type="match status" value="1"/>
</dbReference>
<dbReference type="PROSITE" id="PS00731">
    <property type="entry name" value="AP_NUCLEASE_F2_3"/>
    <property type="match status" value="1"/>
</dbReference>
<dbReference type="PROSITE" id="PS51432">
    <property type="entry name" value="AP_NUCLEASE_F2_4"/>
    <property type="match status" value="1"/>
</dbReference>
<feature type="chain" id="PRO_1000011289" description="Probable endonuclease 4">
    <location>
        <begin position="1"/>
        <end position="298"/>
    </location>
</feature>
<feature type="binding site" evidence="1">
    <location>
        <position position="69"/>
    </location>
    <ligand>
        <name>Zn(2+)</name>
        <dbReference type="ChEBI" id="CHEBI:29105"/>
        <label>1</label>
    </ligand>
</feature>
<feature type="binding site" evidence="1">
    <location>
        <position position="111"/>
    </location>
    <ligand>
        <name>Zn(2+)</name>
        <dbReference type="ChEBI" id="CHEBI:29105"/>
        <label>1</label>
    </ligand>
</feature>
<feature type="binding site" evidence="1">
    <location>
        <position position="146"/>
    </location>
    <ligand>
        <name>Zn(2+)</name>
        <dbReference type="ChEBI" id="CHEBI:29105"/>
        <label>1</label>
    </ligand>
</feature>
<feature type="binding site" evidence="1">
    <location>
        <position position="146"/>
    </location>
    <ligand>
        <name>Zn(2+)</name>
        <dbReference type="ChEBI" id="CHEBI:29105"/>
        <label>2</label>
    </ligand>
</feature>
<feature type="binding site" evidence="1">
    <location>
        <position position="180"/>
    </location>
    <ligand>
        <name>Zn(2+)</name>
        <dbReference type="ChEBI" id="CHEBI:29105"/>
        <label>2</label>
    </ligand>
</feature>
<feature type="binding site" evidence="1">
    <location>
        <position position="183"/>
    </location>
    <ligand>
        <name>Zn(2+)</name>
        <dbReference type="ChEBI" id="CHEBI:29105"/>
        <label>3</label>
    </ligand>
</feature>
<feature type="binding site" evidence="1">
    <location>
        <position position="215"/>
    </location>
    <ligand>
        <name>Zn(2+)</name>
        <dbReference type="ChEBI" id="CHEBI:29105"/>
        <label>2</label>
    </ligand>
</feature>
<feature type="binding site" evidence="1">
    <location>
        <position position="228"/>
    </location>
    <ligand>
        <name>Zn(2+)</name>
        <dbReference type="ChEBI" id="CHEBI:29105"/>
        <label>3</label>
    </ligand>
</feature>
<feature type="binding site" evidence="1">
    <location>
        <position position="230"/>
    </location>
    <ligand>
        <name>Zn(2+)</name>
        <dbReference type="ChEBI" id="CHEBI:29105"/>
        <label>3</label>
    </ligand>
</feature>
<feature type="binding site" evidence="1">
    <location>
        <position position="260"/>
    </location>
    <ligand>
        <name>Zn(2+)</name>
        <dbReference type="ChEBI" id="CHEBI:29105"/>
        <label>2</label>
    </ligand>
</feature>
<proteinExistence type="inferred from homology"/>
<reference key="1">
    <citation type="journal article" date="2007" name="J. Bacteriol.">
        <title>The complete genome sequence of Bacillus thuringiensis Al Hakam.</title>
        <authorList>
            <person name="Challacombe J.F."/>
            <person name="Altherr M.R."/>
            <person name="Xie G."/>
            <person name="Bhotika S.S."/>
            <person name="Brown N."/>
            <person name="Bruce D."/>
            <person name="Campbell C.S."/>
            <person name="Campbell M.L."/>
            <person name="Chen J."/>
            <person name="Chertkov O."/>
            <person name="Cleland C."/>
            <person name="Dimitrijevic M."/>
            <person name="Doggett N.A."/>
            <person name="Fawcett J.J."/>
            <person name="Glavina T."/>
            <person name="Goodwin L.A."/>
            <person name="Green L.D."/>
            <person name="Han C.S."/>
            <person name="Hill K.K."/>
            <person name="Hitchcock P."/>
            <person name="Jackson P.J."/>
            <person name="Keim P."/>
            <person name="Kewalramani A.R."/>
            <person name="Longmire J."/>
            <person name="Lucas S."/>
            <person name="Malfatti S."/>
            <person name="Martinez D."/>
            <person name="McMurry K."/>
            <person name="Meincke L.J."/>
            <person name="Misra M."/>
            <person name="Moseman B.L."/>
            <person name="Mundt M."/>
            <person name="Munk A.C."/>
            <person name="Okinaka R.T."/>
            <person name="Parson-Quintana B."/>
            <person name="Reilly L.P."/>
            <person name="Richardson P."/>
            <person name="Robinson D.L."/>
            <person name="Saunders E."/>
            <person name="Tapia R."/>
            <person name="Tesmer J.G."/>
            <person name="Thayer N."/>
            <person name="Thompson L.S."/>
            <person name="Tice H."/>
            <person name="Ticknor L.O."/>
            <person name="Wills P.L."/>
            <person name="Gilna P."/>
            <person name="Brettin T.S."/>
        </authorList>
    </citation>
    <scope>NUCLEOTIDE SEQUENCE [LARGE SCALE GENOMIC DNA]</scope>
    <source>
        <strain>Al Hakam</strain>
    </source>
</reference>
<accession>A0RIQ8</accession>
<name>END4_BACAH</name>